<reference key="1">
    <citation type="journal article" date="1991" name="Science">
        <title>Characterization of a cofactor that regulates dimerization of a mammalian homeodomain protein.</title>
        <authorList>
            <person name="Mendel D.B."/>
            <person name="Khavari P.A."/>
            <person name="Conley P.B."/>
            <person name="Graves M.K."/>
            <person name="Hansen L.P."/>
            <person name="Admon A."/>
            <person name="Crabtree G.R."/>
        </authorList>
    </citation>
    <scope>NUCLEOTIDE SEQUENCE [MRNA]</scope>
    <scope>PARTIAL PROTEIN SEQUENCE</scope>
    <scope>FUNCTION</scope>
    <scope>SUBUNIT</scope>
    <source>
        <tissue>Liver</tissue>
    </source>
</reference>
<reference key="2">
    <citation type="journal article" date="1998" name="Biol. Chem.">
        <title>Characterization of the chicken and rat DCoH gene domains using an improved ligation-mediated PCR method.</title>
        <authorList>
            <person name="Bossow S."/>
            <person name="Riepl S."/>
            <person name="Igo-Kemenes T."/>
        </authorList>
    </citation>
    <scope>NUCLEOTIDE SEQUENCE [GENOMIC DNA]</scope>
</reference>
<reference key="3">
    <citation type="journal article" date="1993" name="J. Biol. Chem.">
        <title>Phenylalanine hydroxylase-stimulating protein/pterin-4 alpha-carbinolamine dehydratase from rat and human liver. Purification, characterization, and complete amino acid sequence.</title>
        <authorList>
            <person name="Hauer C.R."/>
            <person name="Rebrin I."/>
            <person name="Thoeny B."/>
            <person name="Neuheiser F."/>
            <person name="Curtius H.-C."/>
            <person name="Hunziker P."/>
            <person name="Blau N."/>
            <person name="Ghisla S."/>
            <person name="Heizmann C.W."/>
        </authorList>
    </citation>
    <scope>PROTEIN SEQUENCE OF 2-104</scope>
    <scope>CLEAVAGE OF INITIATOR METHIONINE</scope>
    <scope>ACETYLATION AT ALA-2</scope>
    <scope>CATALYTIC ACTIVITY</scope>
    <scope>FUNCTION</scope>
    <scope>SUBUNIT</scope>
    <scope>SUBCELLULAR LOCATION</scope>
    <scope>IDENTIFICATION BY MASS SPECTROMETRY</scope>
    <source>
        <tissue>Liver</tissue>
    </source>
</reference>
<reference key="4">
    <citation type="journal article" date="1992" name="Proc. Natl. Acad. Sci. U.S.A.">
        <title>Identity of 4a-carbinolamine dehydratase, a component of the phenylalanine hydroxylation system, and DCoH, a transregulator of homeodomain proteins.</title>
        <authorList>
            <person name="Citron B.A."/>
            <person name="Davis M.D."/>
            <person name="Milstien S."/>
            <person name="Gutierrez J."/>
            <person name="Mendel D.B."/>
            <person name="Crabtree G.R."/>
            <person name="Kaufman S."/>
        </authorList>
    </citation>
    <scope>NUCLEOTIDE SEQUENCE [MRNA] OF 21-45</scope>
    <scope>CATALYTIC ACTIVITY</scope>
    <source>
        <strain>Sprague-Dawley</strain>
        <tissue>Liver</tissue>
    </source>
</reference>
<reference key="5">
    <citation type="journal article" date="1995" name="Proc. Natl. Acad. Sci. U.S.A.">
        <title>Characterization of the wild-type form of 4a-carbinolamine dehydratase and two naturally occurring mutants associated with hyperphenylalaninemia.</title>
        <authorList>
            <person name="Johnen G."/>
            <person name="Kowlessur D."/>
            <person name="Citron B.A."/>
            <person name="Kaufman S."/>
        </authorList>
    </citation>
    <scope>FUNCTION</scope>
    <scope>CATALYTIC ACTIVITY</scope>
    <scope>MUTAGENESIS OF CYS-82</scope>
</reference>
<reference key="6">
    <citation type="journal article" date="1995" name="EMBO J.">
        <title>Three-dimensional structure of the bifunctional protein PCD/DCoH, a cytoplasmic enzyme interacting with transcription factor HNF1.</title>
        <authorList>
            <person name="Ficner R."/>
            <person name="Sauer U.H."/>
            <person name="Stier G."/>
            <person name="Suck D."/>
        </authorList>
    </citation>
    <scope>X-RAY CRYSTALLOGRAPHY (2.7 ANGSTROMS)</scope>
    <scope>SUBUNIT</scope>
</reference>
<reference key="7">
    <citation type="journal article" date="1996" name="Protein Sci.">
        <title>High-resolution structures of the bifunctional enzyme and transcriptional coactivator DCoH and its complex with a product analogue.</title>
        <authorList>
            <person name="Cronk J.D."/>
            <person name="Endrizzi J.A."/>
            <person name="Alber T."/>
        </authorList>
    </citation>
    <scope>X-RAY CRYSTALLOGRAPHY (2.3 ANGSTROMS) IN COMPLEX WITH 7,8-DIHYDROBIOPTERIN</scope>
    <scope>SUBUNIT</scope>
</reference>
<reference key="8">
    <citation type="journal article" date="2000" name="Nat. Struct. Biol.">
        <title>Structural basis of dimerization, coactivator recognition and MODY3 mutations in HNF-1alpha.</title>
        <authorList>
            <person name="Rose R.B."/>
            <person name="Bayle J.H."/>
            <person name="Endrizzi J.A."/>
            <person name="Cronk J.D."/>
            <person name="Crabtree G.R."/>
            <person name="Alber T."/>
        </authorList>
    </citation>
    <scope>X-RAY CRYSTALLOGRAPHY (2.6 ANGSTROMS)</scope>
    <scope>INTERACTION WITH HNF1A</scope>
    <scope>SUBUNIT</scope>
</reference>
<accession>P61459</accession>
<accession>P70519</accession>
<accession>P80095</accession>
<accession>Q9D930</accession>
<gene>
    <name type="primary">Pcbd1</name>
    <name type="synonym">Dcoh</name>
    <name type="synonym">Pcbd</name>
</gene>
<keyword id="KW-0002">3D-structure</keyword>
<keyword id="KW-0007">Acetylation</keyword>
<keyword id="KW-0010">Activator</keyword>
<keyword id="KW-0963">Cytoplasm</keyword>
<keyword id="KW-0903">Direct protein sequencing</keyword>
<keyword id="KW-0456">Lyase</keyword>
<keyword id="KW-0539">Nucleus</keyword>
<keyword id="KW-1185">Reference proteome</keyword>
<keyword id="KW-0783">Tetrahydrobiopterin biosynthesis</keyword>
<keyword id="KW-0804">Transcription</keyword>
<keyword id="KW-0805">Transcription regulation</keyword>
<name>PHS_RAT</name>
<comment type="function">
    <text evidence="2 5 7 8">Involved in tetrahydrobiopterin biosynthesis (PubMed:8444860, PubMed:8618906). Seems to both prevent the formation of 7-pterins and accelerate the formation of quinonoid-BH2 (PubMed:8444860). Coactivator for HNF1A-dependent transcription (PubMed:1763325). Regulates the dimerization of homeodomain protein HNF1A and enhances its transcriptional activity (PubMed:1763325). Also acts as a coactivator for HNF1B-dependent transcription (By similarity).</text>
</comment>
<comment type="catalytic activity">
    <reaction evidence="4 7 8">
        <text>(4aS,6R)-4a-hydroxy-L-erythro-5,6,7,8-tetrahydrobiopterin = (6R)-L-erythro-6,7-dihydrobiopterin + H2O</text>
        <dbReference type="Rhea" id="RHEA:11920"/>
        <dbReference type="ChEBI" id="CHEBI:15377"/>
        <dbReference type="ChEBI" id="CHEBI:15642"/>
        <dbReference type="ChEBI" id="CHEBI:43120"/>
        <dbReference type="EC" id="4.2.1.96"/>
    </reaction>
</comment>
<comment type="subunit">
    <text evidence="1 3 5 6 7 9">Homotetramer and homodimer (PubMed:10966642, PubMed:1763325, PubMed:7744010, PubMed:8444860, PubMed:8897596). Heterotetramer with HNF1A; formed by a dimer of dimers (PubMed:10966642). Interacts with HNF1B (via HNF-p1 domain); the interaction increases HNF1B transactivation activity (By similarity).</text>
</comment>
<comment type="subcellular location">
    <subcellularLocation>
        <location evidence="7">Cytoplasm</location>
    </subcellularLocation>
    <subcellularLocation>
        <location evidence="7">Nucleus</location>
    </subcellularLocation>
    <text evidence="1">Recruited to the nucleus through the interaction with HNF1B.</text>
</comment>
<comment type="similarity">
    <text evidence="10">Belongs to the pterin-4-alpha-carbinolamine dehydratase family.</text>
</comment>
<feature type="initiator methionine" description="Removed" evidence="7">
    <location>
        <position position="1"/>
    </location>
</feature>
<feature type="chain" id="PRO_0000063054" description="Pterin-4-alpha-carbinolamine dehydratase">
    <location>
        <begin position="2"/>
        <end position="104"/>
    </location>
</feature>
<feature type="binding site">
    <location>
        <begin position="61"/>
        <end position="63"/>
    </location>
    <ligand>
        <name>substrate</name>
    </ligand>
</feature>
<feature type="binding site">
    <location>
        <begin position="78"/>
        <end position="81"/>
    </location>
    <ligand>
        <name>substrate</name>
    </ligand>
</feature>
<feature type="modified residue" description="N-acetylalanine" evidence="7">
    <location>
        <position position="2"/>
    </location>
</feature>
<feature type="mutagenesis site" description="Reduced dehydratase activity. No impact on hydroxytetrahydrobiopterin-binding." evidence="8">
    <original>C</original>
    <variation>R</variation>
    <location>
        <position position="82"/>
    </location>
</feature>
<feature type="helix" evidence="11">
    <location>
        <begin position="10"/>
        <end position="16"/>
    </location>
</feature>
<feature type="helix" evidence="11">
    <location>
        <begin position="18"/>
        <end position="21"/>
    </location>
</feature>
<feature type="turn" evidence="11">
    <location>
        <begin position="22"/>
        <end position="24"/>
    </location>
</feature>
<feature type="strand" evidence="11">
    <location>
        <begin position="29"/>
        <end position="32"/>
    </location>
</feature>
<feature type="strand" evidence="11">
    <location>
        <begin position="34"/>
        <end position="39"/>
    </location>
</feature>
<feature type="helix" evidence="11">
    <location>
        <begin position="43"/>
        <end position="60"/>
    </location>
</feature>
<feature type="strand" evidence="11">
    <location>
        <begin position="65"/>
        <end position="69"/>
    </location>
</feature>
<feature type="strand" evidence="11">
    <location>
        <begin position="72"/>
        <end position="77"/>
    </location>
</feature>
<feature type="turn" evidence="11">
    <location>
        <begin position="80"/>
        <end position="83"/>
    </location>
</feature>
<feature type="helix" evidence="11">
    <location>
        <begin position="87"/>
        <end position="102"/>
    </location>
</feature>
<organism>
    <name type="scientific">Rattus norvegicus</name>
    <name type="common">Rat</name>
    <dbReference type="NCBI Taxonomy" id="10116"/>
    <lineage>
        <taxon>Eukaryota</taxon>
        <taxon>Metazoa</taxon>
        <taxon>Chordata</taxon>
        <taxon>Craniata</taxon>
        <taxon>Vertebrata</taxon>
        <taxon>Euteleostomi</taxon>
        <taxon>Mammalia</taxon>
        <taxon>Eutheria</taxon>
        <taxon>Euarchontoglires</taxon>
        <taxon>Glires</taxon>
        <taxon>Rodentia</taxon>
        <taxon>Myomorpha</taxon>
        <taxon>Muroidea</taxon>
        <taxon>Muridae</taxon>
        <taxon>Murinae</taxon>
        <taxon>Rattus</taxon>
    </lineage>
</organism>
<protein>
    <recommendedName>
        <fullName>Pterin-4-alpha-carbinolamine dehydratase</fullName>
        <shortName>PHS</shortName>
        <ecNumber evidence="4 7 8">4.2.1.96</ecNumber>
    </recommendedName>
    <alternativeName>
        <fullName>4-alpha-hydroxy-tetrahydropterin dehydratase</fullName>
    </alternativeName>
    <alternativeName>
        <fullName>Dimerization cofactor of hepatocyte nuclear factor 1-alpha</fullName>
        <shortName>DCoH</shortName>
        <shortName>Dimerization cofactor of HNF1</shortName>
    </alternativeName>
    <alternativeName>
        <fullName>Phenylalanine hydroxylase-stimulating protein</fullName>
    </alternativeName>
    <alternativeName>
        <fullName>Pterin carbinolamine dehydratase</fullName>
        <shortName>PCD</shortName>
    </alternativeName>
</protein>
<sequence length="104" mass="12000">MAGKAHRLSAEERDQLLPNLRAVGWNELEGRDAIFKQFHFKDFNRAFGFMTRVALQAEKLDHHPEWFNVYNKVHITLSTHECAGLSERDINLASFIEQVAVSMT</sequence>
<proteinExistence type="evidence at protein level"/>
<dbReference type="EC" id="4.2.1.96" evidence="4 7 8"/>
<dbReference type="EMBL" id="M83740">
    <property type="status" value="NOT_ANNOTATED_CDS"/>
    <property type="molecule type" value="mRNA"/>
</dbReference>
<dbReference type="EMBL" id="AJ005542">
    <property type="protein sequence ID" value="CAA06587.1"/>
    <property type="molecule type" value="Genomic_DNA"/>
</dbReference>
<dbReference type="EMBL" id="L04537">
    <property type="protein sequence ID" value="AAA40609.1"/>
    <property type="molecule type" value="mRNA"/>
</dbReference>
<dbReference type="PIR" id="A47189">
    <property type="entry name" value="A47189"/>
</dbReference>
<dbReference type="RefSeq" id="NP_001007602.1">
    <property type="nucleotide sequence ID" value="NM_001007601.2"/>
</dbReference>
<dbReference type="RefSeq" id="XP_006256476.1">
    <property type="nucleotide sequence ID" value="XM_006256414.2"/>
</dbReference>
<dbReference type="RefSeq" id="XP_063135155.1">
    <property type="nucleotide sequence ID" value="XM_063279085.1"/>
</dbReference>
<dbReference type="PDB" id="1DCH">
    <property type="method" value="X-ray"/>
    <property type="resolution" value="3.00 A"/>
    <property type="chains" value="A/B/C/D/E/F/G/H=1-104"/>
</dbReference>
<dbReference type="PDB" id="1DCO">
    <property type="method" value="X-ray"/>
    <property type="resolution" value="2.30 A"/>
    <property type="chains" value="A/B/C/D/E/F/G/H=1-104"/>
</dbReference>
<dbReference type="PDB" id="1DCP">
    <property type="method" value="X-ray"/>
    <property type="resolution" value="2.30 A"/>
    <property type="chains" value="A/B/C/D/E/F/G/H=1-104"/>
</dbReference>
<dbReference type="PDB" id="1F93">
    <property type="method" value="X-ray"/>
    <property type="resolution" value="2.60 A"/>
    <property type="chains" value="A/B/C/D=1-104"/>
</dbReference>
<dbReference type="PDB" id="3HXA">
    <property type="method" value="X-ray"/>
    <property type="resolution" value="1.80 A"/>
    <property type="chains" value="A/B/C/D/E/F/G/H=1-104"/>
</dbReference>
<dbReference type="PDBsum" id="1DCH"/>
<dbReference type="PDBsum" id="1DCO"/>
<dbReference type="PDBsum" id="1DCP"/>
<dbReference type="PDBsum" id="1F93"/>
<dbReference type="PDBsum" id="3HXA"/>
<dbReference type="SMR" id="P61459"/>
<dbReference type="FunCoup" id="P61459">
    <property type="interactions" value="243"/>
</dbReference>
<dbReference type="STRING" id="10116.ENSRNOP00000000687"/>
<dbReference type="MoonProt" id="P61459"/>
<dbReference type="iPTMnet" id="P61459"/>
<dbReference type="PhosphoSitePlus" id="P61459"/>
<dbReference type="jPOST" id="P61459"/>
<dbReference type="PaxDb" id="10116-ENSRNOP00000000687"/>
<dbReference type="Ensembl" id="ENSRNOT00000115927.1">
    <property type="protein sequence ID" value="ENSRNOP00000080781.1"/>
    <property type="gene ID" value="ENSRNOG00000067614.1"/>
</dbReference>
<dbReference type="Ensembl" id="ENSRNOT00000120036.1">
    <property type="protein sequence ID" value="ENSRNOP00000085944.1"/>
    <property type="gene ID" value="ENSRNOG00000000566.7"/>
</dbReference>
<dbReference type="GeneID" id="29700"/>
<dbReference type="KEGG" id="rno:29700"/>
<dbReference type="UCSC" id="RGD:3263">
    <property type="organism name" value="rat"/>
</dbReference>
<dbReference type="AGR" id="RGD:3263"/>
<dbReference type="CTD" id="5092"/>
<dbReference type="RGD" id="3263">
    <property type="gene designation" value="Pcbd1"/>
</dbReference>
<dbReference type="eggNOG" id="KOG4073">
    <property type="taxonomic scope" value="Eukaryota"/>
</dbReference>
<dbReference type="GeneTree" id="ENSGT00390000007221"/>
<dbReference type="HOGENOM" id="CLU_081974_3_2_1"/>
<dbReference type="InParanoid" id="P61459"/>
<dbReference type="OMA" id="WAEKWNH"/>
<dbReference type="OrthoDB" id="277398at2759"/>
<dbReference type="PhylomeDB" id="P61459"/>
<dbReference type="TreeFam" id="TF300188"/>
<dbReference type="BRENDA" id="4.2.1.96">
    <property type="organism ID" value="5301"/>
</dbReference>
<dbReference type="Reactome" id="R-RNO-8964208">
    <property type="pathway name" value="Phenylalanine metabolism"/>
</dbReference>
<dbReference type="EvolutionaryTrace" id="P61459"/>
<dbReference type="PRO" id="PR:P61459"/>
<dbReference type="Proteomes" id="UP000002494">
    <property type="component" value="Chromosome 20"/>
</dbReference>
<dbReference type="Bgee" id="ENSRNOG00000000566">
    <property type="expression patterns" value="Expressed in liver and 20 other cell types or tissues"/>
</dbReference>
<dbReference type="GO" id="GO:0005737">
    <property type="term" value="C:cytoplasm"/>
    <property type="evidence" value="ECO:0007669"/>
    <property type="project" value="UniProtKB-SubCell"/>
</dbReference>
<dbReference type="GO" id="GO:0005634">
    <property type="term" value="C:nucleus"/>
    <property type="evidence" value="ECO:0000266"/>
    <property type="project" value="RGD"/>
</dbReference>
<dbReference type="GO" id="GO:0008124">
    <property type="term" value="F:4-alpha-hydroxytetrahydrobiopterin dehydratase activity"/>
    <property type="evidence" value="ECO:0000314"/>
    <property type="project" value="CAFA"/>
</dbReference>
<dbReference type="GO" id="GO:0042802">
    <property type="term" value="F:identical protein binding"/>
    <property type="evidence" value="ECO:0000266"/>
    <property type="project" value="RGD"/>
</dbReference>
<dbReference type="GO" id="GO:0004505">
    <property type="term" value="F:phenylalanine 4-monooxygenase activity"/>
    <property type="evidence" value="ECO:0000266"/>
    <property type="project" value="RGD"/>
</dbReference>
<dbReference type="GO" id="GO:0003713">
    <property type="term" value="F:transcription coactivator activity"/>
    <property type="evidence" value="ECO:0000314"/>
    <property type="project" value="MGI"/>
</dbReference>
<dbReference type="GO" id="GO:0006558">
    <property type="term" value="P:L-phenylalanine metabolic process"/>
    <property type="evidence" value="ECO:0000314"/>
    <property type="project" value="CAFA"/>
</dbReference>
<dbReference type="GO" id="GO:0045893">
    <property type="term" value="P:positive regulation of DNA-templated transcription"/>
    <property type="evidence" value="ECO:0000314"/>
    <property type="project" value="MGI"/>
</dbReference>
<dbReference type="GO" id="GO:0043393">
    <property type="term" value="P:regulation of protein binding"/>
    <property type="evidence" value="ECO:0000314"/>
    <property type="project" value="MGI"/>
</dbReference>
<dbReference type="GO" id="GO:0006729">
    <property type="term" value="P:tetrahydrobiopterin biosynthetic process"/>
    <property type="evidence" value="ECO:0007669"/>
    <property type="project" value="UniProtKB-KW"/>
</dbReference>
<dbReference type="CDD" id="cd00914">
    <property type="entry name" value="PCD_DCoH_subfamily_b"/>
    <property type="match status" value="1"/>
</dbReference>
<dbReference type="FunFam" id="3.30.1360.20:FF:000001">
    <property type="entry name" value="Pterin-4-alpha-carbinolamine dehydratase 2"/>
    <property type="match status" value="1"/>
</dbReference>
<dbReference type="Gene3D" id="3.30.1360.20">
    <property type="entry name" value="Transcriptional coactivator/pterin dehydratase"/>
    <property type="match status" value="1"/>
</dbReference>
<dbReference type="HAMAP" id="MF_00434">
    <property type="entry name" value="Pterin_4_alpha"/>
    <property type="match status" value="1"/>
</dbReference>
<dbReference type="InterPro" id="IPR036428">
    <property type="entry name" value="PCD_sf"/>
</dbReference>
<dbReference type="InterPro" id="IPR001533">
    <property type="entry name" value="Pterin_deHydtase"/>
</dbReference>
<dbReference type="NCBIfam" id="NF002018">
    <property type="entry name" value="PRK00823.1-3"/>
    <property type="match status" value="1"/>
</dbReference>
<dbReference type="NCBIfam" id="NF002020">
    <property type="entry name" value="PRK00823.1-5"/>
    <property type="match status" value="1"/>
</dbReference>
<dbReference type="PANTHER" id="PTHR12599">
    <property type="entry name" value="PTERIN-4-ALPHA-CARBINOLAMINE DEHYDRATASE"/>
    <property type="match status" value="1"/>
</dbReference>
<dbReference type="PANTHER" id="PTHR12599:SF13">
    <property type="entry name" value="PTERIN-4-ALPHA-CARBINOLAMINE DEHYDRATASE"/>
    <property type="match status" value="1"/>
</dbReference>
<dbReference type="Pfam" id="PF01329">
    <property type="entry name" value="Pterin_4a"/>
    <property type="match status" value="1"/>
</dbReference>
<dbReference type="SUPFAM" id="SSF55248">
    <property type="entry name" value="PCD-like"/>
    <property type="match status" value="1"/>
</dbReference>
<evidence type="ECO:0000250" key="1">
    <source>
        <dbReference type="UniProtKB" id="P35680"/>
    </source>
</evidence>
<evidence type="ECO:0000250" key="2">
    <source>
        <dbReference type="UniProtKB" id="P61457"/>
    </source>
</evidence>
<evidence type="ECO:0000269" key="3">
    <source>
    </source>
</evidence>
<evidence type="ECO:0000269" key="4">
    <source>
    </source>
</evidence>
<evidence type="ECO:0000269" key="5">
    <source>
    </source>
</evidence>
<evidence type="ECO:0000269" key="6">
    <source>
    </source>
</evidence>
<evidence type="ECO:0000269" key="7">
    <source>
    </source>
</evidence>
<evidence type="ECO:0000269" key="8">
    <source>
    </source>
</evidence>
<evidence type="ECO:0000269" key="9">
    <source>
    </source>
</evidence>
<evidence type="ECO:0000305" key="10"/>
<evidence type="ECO:0007829" key="11">
    <source>
        <dbReference type="PDB" id="3HXA"/>
    </source>
</evidence>